<dbReference type="EC" id="3.2.1.139"/>
<dbReference type="EMBL" id="Z68706">
    <property type="protein sequence ID" value="CAA92949.1"/>
    <property type="molecule type" value="mRNA"/>
</dbReference>
<dbReference type="PIR" id="JC4836">
    <property type="entry name" value="JC4836"/>
</dbReference>
<dbReference type="SMR" id="Q99024"/>
<dbReference type="CAZy" id="GH67">
    <property type="family name" value="Glycoside Hydrolase Family 67"/>
</dbReference>
<dbReference type="VEuPathDB" id="FungiDB:TrQ_007137"/>
<dbReference type="OMA" id="IWRAFVY"/>
<dbReference type="GO" id="GO:0005576">
    <property type="term" value="C:extracellular region"/>
    <property type="evidence" value="ECO:0007669"/>
    <property type="project" value="UniProtKB-SubCell"/>
</dbReference>
<dbReference type="GO" id="GO:0046559">
    <property type="term" value="F:alpha-glucuronidase activity"/>
    <property type="evidence" value="ECO:0007669"/>
    <property type="project" value="UniProtKB-EC"/>
</dbReference>
<dbReference type="GO" id="GO:0045493">
    <property type="term" value="P:xylan catabolic process"/>
    <property type="evidence" value="ECO:0007669"/>
    <property type="project" value="UniProtKB-KW"/>
</dbReference>
<dbReference type="CDD" id="cd02795">
    <property type="entry name" value="CBM6-CBM35-CBM36_like"/>
    <property type="match status" value="1"/>
</dbReference>
<dbReference type="Gene3D" id="3.90.1330.10">
    <property type="entry name" value="Alpha-glucuronidase, C-terminal domain"/>
    <property type="match status" value="1"/>
</dbReference>
<dbReference type="Gene3D" id="3.30.379.10">
    <property type="entry name" value="Chitobiase/beta-hexosaminidase domain 2-like"/>
    <property type="match status" value="1"/>
</dbReference>
<dbReference type="Gene3D" id="2.60.120.260">
    <property type="entry name" value="Galactose-binding domain-like"/>
    <property type="match status" value="1"/>
</dbReference>
<dbReference type="Gene3D" id="3.20.20.80">
    <property type="entry name" value="Glycosidases"/>
    <property type="match status" value="1"/>
</dbReference>
<dbReference type="InterPro" id="IPR037054">
    <property type="entry name" value="A-glucoronidase_C_sf"/>
</dbReference>
<dbReference type="InterPro" id="IPR011395">
    <property type="entry name" value="Glyco_hydro_67_aGlcAse"/>
</dbReference>
<dbReference type="InterPro" id="IPR005154">
    <property type="entry name" value="Glyco_hydro_67_aGlcAse_N"/>
</dbReference>
<dbReference type="InterPro" id="IPR011099">
    <property type="entry name" value="Glyco_hydro_67_C"/>
</dbReference>
<dbReference type="InterPro" id="IPR011100">
    <property type="entry name" value="Glyco_hydro_67_cat"/>
</dbReference>
<dbReference type="InterPro" id="IPR017853">
    <property type="entry name" value="Glycoside_hydrolase_SF"/>
</dbReference>
<dbReference type="InterPro" id="IPR029018">
    <property type="entry name" value="Hex-like_dom2"/>
</dbReference>
<dbReference type="PANTHER" id="PTHR39207">
    <property type="entry name" value="ALPHA-GLUCURONIDASE A"/>
    <property type="match status" value="1"/>
</dbReference>
<dbReference type="PANTHER" id="PTHR39207:SF1">
    <property type="entry name" value="ALPHA-GLUCURONIDASE A"/>
    <property type="match status" value="1"/>
</dbReference>
<dbReference type="Pfam" id="PF07477">
    <property type="entry name" value="Glyco_hydro_67C"/>
    <property type="match status" value="1"/>
</dbReference>
<dbReference type="Pfam" id="PF07488">
    <property type="entry name" value="Glyco_hydro_67M"/>
    <property type="match status" value="1"/>
</dbReference>
<dbReference type="Pfam" id="PF03648">
    <property type="entry name" value="Glyco_hydro_67N"/>
    <property type="match status" value="1"/>
</dbReference>
<dbReference type="PIRSF" id="PIRSF029900">
    <property type="entry name" value="Alpha-glucuronds"/>
    <property type="match status" value="1"/>
</dbReference>
<dbReference type="SUPFAM" id="SSF51445">
    <property type="entry name" value="(Trans)glycosidases"/>
    <property type="match status" value="1"/>
</dbReference>
<dbReference type="SUPFAM" id="SSF55545">
    <property type="entry name" value="beta-N-acetylhexosaminidase-like domain"/>
    <property type="match status" value="1"/>
</dbReference>
<reference key="1">
    <citation type="journal article" date="1996" name="Gene">
        <title>The alpha-glucuronidase-encoding gene of Trichoderma reesei.</title>
        <authorList>
            <person name="Margolles-Clark E."/>
            <person name="Saloheimo M."/>
            <person name="Siika-Aho M."/>
            <person name="Penttilae M."/>
        </authorList>
    </citation>
    <scope>NUCLEOTIDE SEQUENCE [MRNA]</scope>
    <scope>PARTIAL PROTEIN SEQUENCE</scope>
    <source>
        <strain>ATCC 56765 / Rut C-30</strain>
    </source>
</reference>
<keyword id="KW-0119">Carbohydrate metabolism</keyword>
<keyword id="KW-0903">Direct protein sequencing</keyword>
<keyword id="KW-0325">Glycoprotein</keyword>
<keyword id="KW-0326">Glycosidase</keyword>
<keyword id="KW-0378">Hydrolase</keyword>
<keyword id="KW-0624">Polysaccharide degradation</keyword>
<keyword id="KW-0964">Secreted</keyword>
<keyword id="KW-0732">Signal</keyword>
<keyword id="KW-0858">Xylan degradation</keyword>
<proteinExistence type="evidence at protein level"/>
<organism>
    <name type="scientific">Hypocrea jecorina</name>
    <name type="common">Trichoderma reesei</name>
    <dbReference type="NCBI Taxonomy" id="51453"/>
    <lineage>
        <taxon>Eukaryota</taxon>
        <taxon>Fungi</taxon>
        <taxon>Dikarya</taxon>
        <taxon>Ascomycota</taxon>
        <taxon>Pezizomycotina</taxon>
        <taxon>Sordariomycetes</taxon>
        <taxon>Hypocreomycetidae</taxon>
        <taxon>Hypocreales</taxon>
        <taxon>Hypocreaceae</taxon>
        <taxon>Trichoderma</taxon>
    </lineage>
</organism>
<protein>
    <recommendedName>
        <fullName>Alpha-glucuronidase</fullName>
        <ecNumber>3.2.1.139</ecNumber>
    </recommendedName>
    <alternativeName>
        <fullName>Alpha-glucosiduronase</fullName>
    </alternativeName>
    <alternativeName>
        <fullName>GLRI</fullName>
    </alternativeName>
</protein>
<evidence type="ECO:0000255" key="1"/>
<evidence type="ECO:0000305" key="2"/>
<feature type="signal peptide" evidence="1">
    <location>
        <begin position="1"/>
        <end position="19"/>
    </location>
</feature>
<feature type="chain" id="PRO_0000012244" description="Alpha-glucuronidase">
    <location>
        <begin position="20"/>
        <end position="847"/>
    </location>
</feature>
<feature type="glycosylation site" description="N-linked (GlcNAc...) asparagine" evidence="1">
    <location>
        <position position="52"/>
    </location>
</feature>
<feature type="glycosylation site" description="N-linked (GlcNAc...) asparagine" evidence="1">
    <location>
        <position position="238"/>
    </location>
</feature>
<feature type="glycosylation site" description="N-linked (GlcNAc...) asparagine" evidence="1">
    <location>
        <position position="321"/>
    </location>
</feature>
<feature type="glycosylation site" description="N-linked (GlcNAc...) asparagine" evidence="1">
    <location>
        <position position="353"/>
    </location>
</feature>
<feature type="glycosylation site" description="N-linked (GlcNAc...) asparagine" evidence="1">
    <location>
        <position position="586"/>
    </location>
</feature>
<feature type="glycosylation site" description="N-linked (GlcNAc...) asparagine" evidence="1">
    <location>
        <position position="692"/>
    </location>
</feature>
<feature type="glycosylation site" description="N-linked (GlcNAc...) asparagine" evidence="1">
    <location>
        <position position="740"/>
    </location>
</feature>
<feature type="glycosylation site" description="N-linked (GlcNAc...) asparagine" evidence="1">
    <location>
        <position position="767"/>
    </location>
</feature>
<comment type="function">
    <text>Releases 4-O-methylglucuronic acid from xylan.</text>
</comment>
<comment type="catalytic activity">
    <reaction>
        <text>an alpha-D-glucuronoside + H2O = D-glucuronate + an alcohol</text>
        <dbReference type="Rhea" id="RHEA:20005"/>
        <dbReference type="ChEBI" id="CHEBI:15377"/>
        <dbReference type="ChEBI" id="CHEBI:30879"/>
        <dbReference type="ChEBI" id="CHEBI:58720"/>
        <dbReference type="ChEBI" id="CHEBI:58899"/>
        <dbReference type="EC" id="3.2.1.139"/>
    </reaction>
</comment>
<comment type="subcellular location">
    <subcellularLocation>
        <location>Secreted</location>
    </subcellularLocation>
</comment>
<comment type="similarity">
    <text evidence="2">Belongs to the glycosyl hydrolase 67 family.</text>
</comment>
<name>AGUA_HYPJE</name>
<accession>Q99024</accession>
<sequence>MVIRSLLLLLLAAIVPVFAESGIDAWLRYARLPSSATRGHLTSFPDRIVVLNASKNGPLASASSELHKGIKGILGLDLDVSSRGGKHCSTQKSIVISTLDTYQSACGKLSPKLNLKEDGYWLSTKGGSVQIIGQNERGALYGAFQYLSYLGQGDFSGKAFASNPSAPVRWSNQWDNLNAATAAHGSIERGYGGPSIFFENGLIKEDLSRVPLYGRLLASVGLNGIVINNVNADANLLNETNLQGLKRIADLFRPWGVNVGISLNFASPQVLGDLSTFDPLDDSVIKWWTDKTDRIYQLVPDLAGYLVKANSEGQPGPLTYNRTLAEGANLFAKAVQPHGGIVVFRAFVYDQLNETDWKADRANAAVDFFKSLDGQFDDNVLVQIKYGPIDFQVREPASPLFANLPKTAVSIELEVTQEYLGQQSHLVYLPPLWQTVLGFDMRYNNRQSYVRDIISGEVFGHKLGGYAGVINVGMDDTWLGSHLAMSNMFAYGRLAWNPRADSRDIVEEWTRLTFGLDRDVVSTIADMSLKSWPAYEGYSGNLGIQTLTDILYTHYGANPASQDNNGWGQWTRADSKTIGMDRTVSNGTGNAGQYPKEVAARFEHTQTTPDDLMLWFHHVPYTFRLHSGKSVIQHFYDAHYTGAATVQRFPAAWKSLKSKIDTERYNAVLYKLQYQTGHSLVWRDAITEFYRNLSSIPDQLNRVRNHPHRIEAEDMDLSGFTVVNVSPTECASKYKAIATNGTGTATTRLNVPSGKYTVAVNYYDVINGTASYDVLLNGKSLGKWKGDSETHLGHDFSTFLDCHSAIRITFEGVRISRGDKLTIRGTGNAQEQAAIDYVSILPQGVVD</sequence>